<comment type="similarity">
    <text evidence="1">Belongs to the bacterial ribosomal protein bL36 family.</text>
</comment>
<reference key="1">
    <citation type="submission" date="2006-06" db="EMBL/GenBank/DDBJ databases">
        <title>Complete sequence of chromosome of Mycobacterium sp. MCS.</title>
        <authorList>
            <consortium name="US DOE Joint Genome Institute"/>
            <person name="Copeland A."/>
            <person name="Lucas S."/>
            <person name="Lapidus A."/>
            <person name="Barry K."/>
            <person name="Detter J.C."/>
            <person name="Glavina del Rio T."/>
            <person name="Hammon N."/>
            <person name="Israni S."/>
            <person name="Dalin E."/>
            <person name="Tice H."/>
            <person name="Pitluck S."/>
            <person name="Martinez M."/>
            <person name="Schmutz J."/>
            <person name="Larimer F."/>
            <person name="Land M."/>
            <person name="Hauser L."/>
            <person name="Kyrpides N."/>
            <person name="Kim E."/>
            <person name="Miller C.D."/>
            <person name="Hughes J.E."/>
            <person name="Anderson A.J."/>
            <person name="Sims R.C."/>
            <person name="Richardson P."/>
        </authorList>
    </citation>
    <scope>NUCLEOTIDE SEQUENCE [LARGE SCALE GENOMIC DNA]</scope>
    <source>
        <strain>MCS</strain>
    </source>
</reference>
<proteinExistence type="inferred from homology"/>
<protein>
    <recommendedName>
        <fullName evidence="1">Large ribosomal subunit protein bL36</fullName>
    </recommendedName>
    <alternativeName>
        <fullName evidence="2">50S ribosomal protein L36</fullName>
    </alternativeName>
</protein>
<keyword id="KW-0687">Ribonucleoprotein</keyword>
<keyword id="KW-0689">Ribosomal protein</keyword>
<dbReference type="EMBL" id="CP000384">
    <property type="protein sequence ID" value="ABG07222.1"/>
    <property type="molecule type" value="Genomic_DNA"/>
</dbReference>
<dbReference type="SMR" id="Q1BD12"/>
<dbReference type="KEGG" id="mmc:Mmcs_1109"/>
<dbReference type="HOGENOM" id="CLU_135723_6_2_11"/>
<dbReference type="BioCyc" id="MSP164756:G1G6O-1135-MONOMER"/>
<dbReference type="GO" id="GO:0005737">
    <property type="term" value="C:cytoplasm"/>
    <property type="evidence" value="ECO:0007669"/>
    <property type="project" value="UniProtKB-ARBA"/>
</dbReference>
<dbReference type="GO" id="GO:1990904">
    <property type="term" value="C:ribonucleoprotein complex"/>
    <property type="evidence" value="ECO:0007669"/>
    <property type="project" value="UniProtKB-KW"/>
</dbReference>
<dbReference type="GO" id="GO:0005840">
    <property type="term" value="C:ribosome"/>
    <property type="evidence" value="ECO:0007669"/>
    <property type="project" value="UniProtKB-KW"/>
</dbReference>
<dbReference type="GO" id="GO:0003735">
    <property type="term" value="F:structural constituent of ribosome"/>
    <property type="evidence" value="ECO:0007669"/>
    <property type="project" value="InterPro"/>
</dbReference>
<dbReference type="GO" id="GO:0006412">
    <property type="term" value="P:translation"/>
    <property type="evidence" value="ECO:0007669"/>
    <property type="project" value="UniProtKB-UniRule"/>
</dbReference>
<dbReference type="HAMAP" id="MF_00251">
    <property type="entry name" value="Ribosomal_bL36"/>
    <property type="match status" value="1"/>
</dbReference>
<dbReference type="InterPro" id="IPR000473">
    <property type="entry name" value="Ribosomal_bL36"/>
</dbReference>
<dbReference type="InterPro" id="IPR035977">
    <property type="entry name" value="Ribosomal_bL36_sp"/>
</dbReference>
<dbReference type="NCBIfam" id="TIGR01022">
    <property type="entry name" value="rpmJ_bact"/>
    <property type="match status" value="1"/>
</dbReference>
<dbReference type="PANTHER" id="PTHR42888">
    <property type="entry name" value="50S RIBOSOMAL PROTEIN L36, CHLOROPLASTIC"/>
    <property type="match status" value="1"/>
</dbReference>
<dbReference type="PANTHER" id="PTHR42888:SF1">
    <property type="entry name" value="LARGE RIBOSOMAL SUBUNIT PROTEIN BL36C"/>
    <property type="match status" value="1"/>
</dbReference>
<dbReference type="Pfam" id="PF00444">
    <property type="entry name" value="Ribosomal_L36"/>
    <property type="match status" value="1"/>
</dbReference>
<dbReference type="SUPFAM" id="SSF57840">
    <property type="entry name" value="Ribosomal protein L36"/>
    <property type="match status" value="1"/>
</dbReference>
<dbReference type="PROSITE" id="PS00828">
    <property type="entry name" value="RIBOSOMAL_L36"/>
    <property type="match status" value="1"/>
</dbReference>
<name>RL36_MYCSS</name>
<organism>
    <name type="scientific">Mycobacterium sp. (strain MCS)</name>
    <dbReference type="NCBI Taxonomy" id="164756"/>
    <lineage>
        <taxon>Bacteria</taxon>
        <taxon>Bacillati</taxon>
        <taxon>Actinomycetota</taxon>
        <taxon>Actinomycetes</taxon>
        <taxon>Mycobacteriales</taxon>
        <taxon>Mycobacteriaceae</taxon>
        <taxon>Mycobacterium</taxon>
    </lineage>
</organism>
<feature type="chain" id="PRO_0000302246" description="Large ribosomal subunit protein bL36">
    <location>
        <begin position="1"/>
        <end position="37"/>
    </location>
</feature>
<evidence type="ECO:0000255" key="1">
    <source>
        <dbReference type="HAMAP-Rule" id="MF_00251"/>
    </source>
</evidence>
<evidence type="ECO:0000305" key="2"/>
<gene>
    <name evidence="1" type="primary">rpmJ</name>
    <name type="ordered locus">Mmcs_1109</name>
</gene>
<sequence>MKVNPSVKPICDKCRVIRRHGRVMVICSDPRHKQRQG</sequence>
<accession>Q1BD12</accession>